<accession>B2HD97</accession>
<keyword id="KW-0963">Cytoplasm</keyword>
<keyword id="KW-0378">Hydrolase</keyword>
<keyword id="KW-1185">Reference proteome</keyword>
<keyword id="KW-0694">RNA-binding</keyword>
<keyword id="KW-0820">tRNA-binding</keyword>
<protein>
    <recommendedName>
        <fullName evidence="1">D-aminoacyl-tRNA deacylase</fullName>
        <shortName evidence="1">DTD</shortName>
        <ecNumber evidence="1">3.1.1.96</ecNumber>
    </recommendedName>
    <alternativeName>
        <fullName evidence="1">Gly-tRNA(Ala) deacylase</fullName>
    </alternativeName>
</protein>
<name>DTD_MYCMM</name>
<proteinExistence type="inferred from homology"/>
<sequence length="143" mass="15128">MRVLVQRVCSAAVTVDGDVVGAVRPPGQGLLAFVGVTHGDDGDKARRLAEKLWYLRILTDEKSASDLGAPILVVSQFTLYADTVKGRRPSWNAAAPRAVAEPLVAAFAEALRALGAHVEAGVFGAHMQVELINDGPVTVMLEL</sequence>
<dbReference type="EC" id="3.1.1.96" evidence="1"/>
<dbReference type="EMBL" id="CP000854">
    <property type="protein sequence ID" value="ACC41234.1"/>
    <property type="molecule type" value="Genomic_DNA"/>
</dbReference>
<dbReference type="RefSeq" id="WP_011740834.1">
    <property type="nucleotide sequence ID" value="NC_010612.1"/>
</dbReference>
<dbReference type="SMR" id="B2HD97"/>
<dbReference type="STRING" id="216594.MMAR_2792"/>
<dbReference type="GeneID" id="34343287"/>
<dbReference type="GeneID" id="93437079"/>
<dbReference type="KEGG" id="mmi:MMAR_2792"/>
<dbReference type="eggNOG" id="COG1490">
    <property type="taxonomic scope" value="Bacteria"/>
</dbReference>
<dbReference type="HOGENOM" id="CLU_076901_1_2_11"/>
<dbReference type="OrthoDB" id="9801395at2"/>
<dbReference type="Proteomes" id="UP000001190">
    <property type="component" value="Chromosome"/>
</dbReference>
<dbReference type="GO" id="GO:0005737">
    <property type="term" value="C:cytoplasm"/>
    <property type="evidence" value="ECO:0007669"/>
    <property type="project" value="UniProtKB-SubCell"/>
</dbReference>
<dbReference type="GO" id="GO:0051500">
    <property type="term" value="F:D-tyrosyl-tRNA(Tyr) deacylase activity"/>
    <property type="evidence" value="ECO:0007669"/>
    <property type="project" value="TreeGrafter"/>
</dbReference>
<dbReference type="GO" id="GO:0106026">
    <property type="term" value="F:Gly-tRNA(Ala) deacylase activity"/>
    <property type="evidence" value="ECO:0007669"/>
    <property type="project" value="UniProtKB-UniRule"/>
</dbReference>
<dbReference type="GO" id="GO:0043908">
    <property type="term" value="F:Ser(Gly)-tRNA(Ala) hydrolase activity"/>
    <property type="evidence" value="ECO:0007669"/>
    <property type="project" value="UniProtKB-UniRule"/>
</dbReference>
<dbReference type="GO" id="GO:0000049">
    <property type="term" value="F:tRNA binding"/>
    <property type="evidence" value="ECO:0007669"/>
    <property type="project" value="UniProtKB-UniRule"/>
</dbReference>
<dbReference type="GO" id="GO:0019478">
    <property type="term" value="P:D-amino acid catabolic process"/>
    <property type="evidence" value="ECO:0007669"/>
    <property type="project" value="UniProtKB-UniRule"/>
</dbReference>
<dbReference type="CDD" id="cd00563">
    <property type="entry name" value="Dtyr_deacylase"/>
    <property type="match status" value="1"/>
</dbReference>
<dbReference type="FunFam" id="3.50.80.10:FF:000002">
    <property type="entry name" value="D-aminoacyl-tRNA deacylase"/>
    <property type="match status" value="1"/>
</dbReference>
<dbReference type="Gene3D" id="3.50.80.10">
    <property type="entry name" value="D-tyrosyl-tRNA(Tyr) deacylase"/>
    <property type="match status" value="1"/>
</dbReference>
<dbReference type="HAMAP" id="MF_00518">
    <property type="entry name" value="Deacylase_Dtd"/>
    <property type="match status" value="1"/>
</dbReference>
<dbReference type="InterPro" id="IPR003732">
    <property type="entry name" value="Daa-tRNA_deacyls_DTD"/>
</dbReference>
<dbReference type="InterPro" id="IPR023509">
    <property type="entry name" value="DTD-like_sf"/>
</dbReference>
<dbReference type="NCBIfam" id="TIGR00256">
    <property type="entry name" value="D-aminoacyl-tRNA deacylase"/>
    <property type="match status" value="1"/>
</dbReference>
<dbReference type="PANTHER" id="PTHR10472:SF5">
    <property type="entry name" value="D-AMINOACYL-TRNA DEACYLASE 1"/>
    <property type="match status" value="1"/>
</dbReference>
<dbReference type="PANTHER" id="PTHR10472">
    <property type="entry name" value="D-TYROSYL-TRNA TYR DEACYLASE"/>
    <property type="match status" value="1"/>
</dbReference>
<dbReference type="Pfam" id="PF02580">
    <property type="entry name" value="Tyr_Deacylase"/>
    <property type="match status" value="1"/>
</dbReference>
<dbReference type="SUPFAM" id="SSF69500">
    <property type="entry name" value="DTD-like"/>
    <property type="match status" value="1"/>
</dbReference>
<gene>
    <name evidence="1" type="primary">dtd</name>
    <name type="ordered locus">MMAR_2792</name>
</gene>
<organism>
    <name type="scientific">Mycobacterium marinum (strain ATCC BAA-535 / M)</name>
    <dbReference type="NCBI Taxonomy" id="216594"/>
    <lineage>
        <taxon>Bacteria</taxon>
        <taxon>Bacillati</taxon>
        <taxon>Actinomycetota</taxon>
        <taxon>Actinomycetes</taxon>
        <taxon>Mycobacteriales</taxon>
        <taxon>Mycobacteriaceae</taxon>
        <taxon>Mycobacterium</taxon>
        <taxon>Mycobacterium ulcerans group</taxon>
    </lineage>
</organism>
<reference key="1">
    <citation type="journal article" date="2008" name="Genome Res.">
        <title>Insights from the complete genome sequence of Mycobacterium marinum on the evolution of Mycobacterium tuberculosis.</title>
        <authorList>
            <person name="Stinear T.P."/>
            <person name="Seemann T."/>
            <person name="Harrison P.F."/>
            <person name="Jenkin G.A."/>
            <person name="Davies J.K."/>
            <person name="Johnson P.D."/>
            <person name="Abdellah Z."/>
            <person name="Arrowsmith C."/>
            <person name="Chillingworth T."/>
            <person name="Churcher C."/>
            <person name="Clarke K."/>
            <person name="Cronin A."/>
            <person name="Davis P."/>
            <person name="Goodhead I."/>
            <person name="Holroyd N."/>
            <person name="Jagels K."/>
            <person name="Lord A."/>
            <person name="Moule S."/>
            <person name="Mungall K."/>
            <person name="Norbertczak H."/>
            <person name="Quail M.A."/>
            <person name="Rabbinowitsch E."/>
            <person name="Walker D."/>
            <person name="White B."/>
            <person name="Whitehead S."/>
            <person name="Small P.L."/>
            <person name="Brosch R."/>
            <person name="Ramakrishnan L."/>
            <person name="Fischbach M.A."/>
            <person name="Parkhill J."/>
            <person name="Cole S.T."/>
        </authorList>
    </citation>
    <scope>NUCLEOTIDE SEQUENCE [LARGE SCALE GENOMIC DNA]</scope>
    <source>
        <strain>ATCC BAA-535 / M</strain>
    </source>
</reference>
<feature type="chain" id="PRO_1000127553" description="D-aminoacyl-tRNA deacylase">
    <location>
        <begin position="1"/>
        <end position="143"/>
    </location>
</feature>
<feature type="short sequence motif" description="Gly-cisPro motif, important for rejection of L-amino acids" evidence="1">
    <location>
        <begin position="135"/>
        <end position="136"/>
    </location>
</feature>
<evidence type="ECO:0000255" key="1">
    <source>
        <dbReference type="HAMAP-Rule" id="MF_00518"/>
    </source>
</evidence>
<comment type="function">
    <text evidence="1">An aminoacyl-tRNA editing enzyme that deacylates mischarged D-aminoacyl-tRNAs. Also deacylates mischarged glycyl-tRNA(Ala), protecting cells against glycine mischarging by AlaRS. Acts via tRNA-based rather than protein-based catalysis; rejects L-amino acids rather than detecting D-amino acids in the active site. By recycling D-aminoacyl-tRNA to D-amino acids and free tRNA molecules, this enzyme counteracts the toxicity associated with the formation of D-aminoacyl-tRNA entities in vivo and helps enforce protein L-homochirality.</text>
</comment>
<comment type="catalytic activity">
    <reaction evidence="1">
        <text>glycyl-tRNA(Ala) + H2O = tRNA(Ala) + glycine + H(+)</text>
        <dbReference type="Rhea" id="RHEA:53744"/>
        <dbReference type="Rhea" id="RHEA-COMP:9657"/>
        <dbReference type="Rhea" id="RHEA-COMP:13640"/>
        <dbReference type="ChEBI" id="CHEBI:15377"/>
        <dbReference type="ChEBI" id="CHEBI:15378"/>
        <dbReference type="ChEBI" id="CHEBI:57305"/>
        <dbReference type="ChEBI" id="CHEBI:78442"/>
        <dbReference type="ChEBI" id="CHEBI:78522"/>
        <dbReference type="EC" id="3.1.1.96"/>
    </reaction>
</comment>
<comment type="catalytic activity">
    <reaction evidence="1">
        <text>a D-aminoacyl-tRNA + H2O = a tRNA + a D-alpha-amino acid + H(+)</text>
        <dbReference type="Rhea" id="RHEA:13953"/>
        <dbReference type="Rhea" id="RHEA-COMP:10123"/>
        <dbReference type="Rhea" id="RHEA-COMP:10124"/>
        <dbReference type="ChEBI" id="CHEBI:15377"/>
        <dbReference type="ChEBI" id="CHEBI:15378"/>
        <dbReference type="ChEBI" id="CHEBI:59871"/>
        <dbReference type="ChEBI" id="CHEBI:78442"/>
        <dbReference type="ChEBI" id="CHEBI:79333"/>
        <dbReference type="EC" id="3.1.1.96"/>
    </reaction>
</comment>
<comment type="subunit">
    <text evidence="1">Homodimer.</text>
</comment>
<comment type="subcellular location">
    <subcellularLocation>
        <location evidence="1">Cytoplasm</location>
    </subcellularLocation>
</comment>
<comment type="domain">
    <text evidence="1">A Gly-cisPro motif from one monomer fits into the active site of the other monomer to allow specific chiral rejection of L-amino acids.</text>
</comment>
<comment type="similarity">
    <text evidence="1">Belongs to the DTD family.</text>
</comment>